<feature type="chain" id="PRO_0000385092" description="Uncharacterized protein ORF70">
    <location>
        <begin position="1"/>
        <end position="200"/>
    </location>
</feature>
<organism>
    <name type="scientific">Ostreid herpesvirus 1 (isolate France)</name>
    <name type="common">OsHV-1</name>
    <name type="synonym">Pacific oyster herpesvirus</name>
    <dbReference type="NCBI Taxonomy" id="654903"/>
    <lineage>
        <taxon>Viruses</taxon>
        <taxon>Duplodnaviria</taxon>
        <taxon>Heunggongvirae</taxon>
        <taxon>Peploviricota</taxon>
        <taxon>Herviviricetes</taxon>
        <taxon>Herpesvirales</taxon>
        <taxon>Malacoherpesviridae</taxon>
        <taxon>Ostreavirus</taxon>
        <taxon>Ostreavirus ostreidmalaco1</taxon>
        <taxon>Ostreid herpesvirus 1</taxon>
    </lineage>
</organism>
<reference key="1">
    <citation type="journal article" date="2005" name="J. Gen. Virol.">
        <title>A novel class of herpesvirus with bivalve hosts.</title>
        <authorList>
            <person name="Davison A.J."/>
            <person name="Trus B.L."/>
            <person name="Cheng N."/>
            <person name="Steven A.C."/>
            <person name="Watson M.S."/>
            <person name="Cunningham C."/>
            <person name="Le Deuff R.M."/>
            <person name="Renault T."/>
        </authorList>
    </citation>
    <scope>NUCLEOTIDE SEQUENCE [LARGE SCALE GENOMIC DNA]</scope>
</reference>
<organismHost>
    <name type="scientific">Magallana gigas</name>
    <name type="common">Pacific oyster</name>
    <name type="synonym">Crassostrea gigas</name>
    <dbReference type="NCBI Taxonomy" id="29159"/>
</organismHost>
<organismHost>
    <name type="scientific">Pecten maximus</name>
    <name type="common">King scallop</name>
    <name type="synonym">Pilgrim's clam</name>
    <dbReference type="NCBI Taxonomy" id="6579"/>
</organismHost>
<dbReference type="EMBL" id="AY509253">
    <property type="protein sequence ID" value="AAS00957.1"/>
    <property type="molecule type" value="Genomic_DNA"/>
</dbReference>
<dbReference type="RefSeq" id="YP_024610.1">
    <property type="nucleotide sequence ID" value="NC_005881.2"/>
</dbReference>
<dbReference type="KEGG" id="vg:2948239"/>
<dbReference type="Proteomes" id="UP000007021">
    <property type="component" value="Segment"/>
</dbReference>
<sequence>MATLSDVFHFAKRCRLDSEFSEVIDSCCYHCIEGLNGVDMGTRELVIFLQRFVPRPVIDSPKPDMVLVEKLVHAHTVYRGCKAEKCEIVKRMVNYLFEVKPKSPALKEYIYKNSETMDIGDYWFDDEMYDIIISNLDWQRTRYTADNVHSCYFLLNTHTSKMCMKKARAAMSRLMSPTTLLVIPWFWKRLNHKMSQKHTM</sequence>
<accession>Q6R7F8</accession>
<keyword id="KW-1185">Reference proteome</keyword>
<gene>
    <name type="ORF">ORF70</name>
</gene>
<protein>
    <recommendedName>
        <fullName>Uncharacterized protein ORF70</fullName>
    </recommendedName>
</protein>
<proteinExistence type="predicted"/>
<name>Y070_OSHVF</name>